<organism>
    <name type="scientific">Drosophila simulans</name>
    <name type="common">Fruit fly</name>
    <dbReference type="NCBI Taxonomy" id="7240"/>
    <lineage>
        <taxon>Eukaryota</taxon>
        <taxon>Metazoa</taxon>
        <taxon>Ecdysozoa</taxon>
        <taxon>Arthropoda</taxon>
        <taxon>Hexapoda</taxon>
        <taxon>Insecta</taxon>
        <taxon>Pterygota</taxon>
        <taxon>Neoptera</taxon>
        <taxon>Endopterygota</taxon>
        <taxon>Diptera</taxon>
        <taxon>Brachycera</taxon>
        <taxon>Muscomorpha</taxon>
        <taxon>Ephydroidea</taxon>
        <taxon>Drosophilidae</taxon>
        <taxon>Drosophila</taxon>
        <taxon>Sophophora</taxon>
    </lineage>
</organism>
<accession>P50253</accession>
<accession>C6KI55</accession>
<accession>Q6UHJ8</accession>
<accession>Q6UHP0</accession>
<accession>Q8SGU5</accession>
<accession>Q9MD62</accession>
<accession>Q9MD70</accession>
<accession>Q9MDM7</accession>
<feature type="chain" id="PRO_0000183585" description="Cytochrome c oxidase subunit 2">
    <location>
        <begin position="1"/>
        <end position="228"/>
    </location>
</feature>
<feature type="topological domain" description="Mitochondrial intermembrane" evidence="2">
    <location>
        <begin position="1"/>
        <end position="26"/>
    </location>
</feature>
<feature type="transmembrane region" description="Helical" evidence="2">
    <location>
        <begin position="27"/>
        <end position="48"/>
    </location>
</feature>
<feature type="topological domain" description="Mitochondrial matrix" evidence="2">
    <location>
        <begin position="49"/>
        <end position="62"/>
    </location>
</feature>
<feature type="transmembrane region" description="Helical" evidence="2">
    <location>
        <begin position="63"/>
        <end position="82"/>
    </location>
</feature>
<feature type="topological domain" description="Mitochondrial intermembrane" evidence="2">
    <location>
        <begin position="83"/>
        <end position="228"/>
    </location>
</feature>
<feature type="binding site" evidence="1">
    <location>
        <position position="161"/>
    </location>
    <ligand>
        <name>Cu cation</name>
        <dbReference type="ChEBI" id="CHEBI:23378"/>
        <label>A1</label>
    </ligand>
</feature>
<feature type="binding site" evidence="1">
    <location>
        <position position="196"/>
    </location>
    <ligand>
        <name>Cu cation</name>
        <dbReference type="ChEBI" id="CHEBI:23378"/>
        <label>A1</label>
    </ligand>
</feature>
<feature type="binding site" evidence="1">
    <location>
        <position position="196"/>
    </location>
    <ligand>
        <name>Cu cation</name>
        <dbReference type="ChEBI" id="CHEBI:23378"/>
        <label>A2</label>
    </ligand>
</feature>
<feature type="binding site" evidence="1">
    <location>
        <position position="198"/>
    </location>
    <ligand>
        <name>Cu cation</name>
        <dbReference type="ChEBI" id="CHEBI:23378"/>
        <label>A2</label>
    </ligand>
</feature>
<feature type="binding site" evidence="1">
    <location>
        <position position="198"/>
    </location>
    <ligand>
        <name>Mg(2+)</name>
        <dbReference type="ChEBI" id="CHEBI:18420"/>
        <note>ligand shared with subunit 1</note>
    </ligand>
</feature>
<feature type="binding site" evidence="1">
    <location>
        <position position="200"/>
    </location>
    <ligand>
        <name>Cu cation</name>
        <dbReference type="ChEBI" id="CHEBI:23378"/>
        <label>A1</label>
    </ligand>
</feature>
<feature type="binding site" evidence="1">
    <location>
        <position position="200"/>
    </location>
    <ligand>
        <name>Cu cation</name>
        <dbReference type="ChEBI" id="CHEBI:23378"/>
        <label>A2</label>
    </ligand>
</feature>
<feature type="binding site" evidence="1">
    <location>
        <position position="204"/>
    </location>
    <ligand>
        <name>Cu cation</name>
        <dbReference type="ChEBI" id="CHEBI:23378"/>
        <label>A2</label>
    </ligand>
</feature>
<feature type="binding site" evidence="1">
    <location>
        <position position="207"/>
    </location>
    <ligand>
        <name>Cu cation</name>
        <dbReference type="ChEBI" id="CHEBI:23378"/>
        <label>A1</label>
    </ligand>
</feature>
<feature type="sequence variant" description="In strain: 14021-0251.0." evidence="4">
    <original>D</original>
    <variation>A</variation>
    <location>
        <position position="25"/>
    </location>
</feature>
<feature type="sequence variant" description="In strain: HW00, HW09, NC37, NC48, TT00 and TT01." evidence="3">
    <original>N</original>
    <variation>S</variation>
    <location>
        <position position="115"/>
    </location>
</feature>
<feature type="sequence variant" description="In strain: MD106, MD225 and RU35." evidence="3 6">
    <original>F</original>
    <variation>Y</variation>
    <location>
        <position position="118"/>
    </location>
</feature>
<feature type="sequence variant" description="In strain: 14021-0251.0, C167, AU023, DSR, DSW, KY007, KY045, KY201, KY215, MD106, MD111, MD112, MD199, MD221, MD225, MDW86, RU00, RU01, RU07, RU35, RU259 and Sc00." evidence="3 4 5 6">
    <original>T</original>
    <variation>S</variation>
    <location>
        <position position="129"/>
    </location>
</feature>
<feature type="sequence variant" description="In strain: 14021-0251.0, C167, AU023, DSR, DSW, KY007, KY045, KY201, KY215, MD106, MD111, MD112, MD199, MD221, MD225, MDW86, RU00, RU01, RU07, RU35, RU259 and Sc00." evidence="3 4 5 6">
    <original>T</original>
    <variation>I</variation>
    <location>
        <position position="130"/>
    </location>
</feature>
<feature type="sequence variant" description="In strain: AU023, C167, DSR, DSW, KY007, KY045, KY201, KY215, MD106, MD111, MD112, MD199, MD221, MD225, MDW86, RU00, RU01, RU07, RU35, RU259 and Sc00." evidence="3 5 6">
    <original>V</original>
    <variation>I</variation>
    <location>
        <position position="165"/>
    </location>
</feature>
<feature type="sequence variant" description="In strain: 14021-0251.0.">
    <original>H</original>
    <variation>N</variation>
    <location>
        <position position="218"/>
    </location>
</feature>
<proteinExistence type="inferred from homology"/>
<protein>
    <recommendedName>
        <fullName>Cytochrome c oxidase subunit 2</fullName>
        <ecNumber>7.1.1.9</ecNumber>
    </recommendedName>
    <alternativeName>
        <fullName>Cytochrome c oxidase polypeptide II</fullName>
    </alternativeName>
</protein>
<dbReference type="EC" id="7.1.1.9"/>
<dbReference type="EMBL" id="S64977">
    <property type="protein sequence ID" value="AAD13956.2"/>
    <property type="status" value="ALT_INIT"/>
    <property type="molecule type" value="Genomic_DNA"/>
</dbReference>
<dbReference type="EMBL" id="AF474082">
    <property type="protein sequence ID" value="AAL83266.1"/>
    <property type="molecule type" value="Genomic_DNA"/>
</dbReference>
<dbReference type="EMBL" id="AY370272">
    <property type="protein sequence ID" value="AAR21759.1"/>
    <property type="molecule type" value="Genomic_DNA"/>
</dbReference>
<dbReference type="EMBL" id="AY370273">
    <property type="protein sequence ID" value="AAR21760.1"/>
    <property type="molecule type" value="Genomic_DNA"/>
</dbReference>
<dbReference type="EMBL" id="AY370274">
    <property type="protein sequence ID" value="AAR21761.1"/>
    <property type="molecule type" value="Genomic_DNA"/>
</dbReference>
<dbReference type="EMBL" id="AY370275">
    <property type="protein sequence ID" value="AAR21762.1"/>
    <property type="molecule type" value="Genomic_DNA"/>
</dbReference>
<dbReference type="EMBL" id="AY370276">
    <property type="protein sequence ID" value="AAR21763.1"/>
    <property type="molecule type" value="Genomic_DNA"/>
</dbReference>
<dbReference type="EMBL" id="AY370277">
    <property type="protein sequence ID" value="AAR21764.1"/>
    <property type="molecule type" value="Genomic_DNA"/>
</dbReference>
<dbReference type="EMBL" id="AY370278">
    <property type="protein sequence ID" value="AAR21765.1"/>
    <property type="molecule type" value="Genomic_DNA"/>
</dbReference>
<dbReference type="EMBL" id="AY370279">
    <property type="protein sequence ID" value="AAR21766.1"/>
    <property type="molecule type" value="Genomic_DNA"/>
</dbReference>
<dbReference type="EMBL" id="AY370280">
    <property type="protein sequence ID" value="AAR21767.1"/>
    <property type="molecule type" value="Genomic_DNA"/>
</dbReference>
<dbReference type="EMBL" id="AY370281">
    <property type="protein sequence ID" value="AAR21768.1"/>
    <property type="molecule type" value="Genomic_DNA"/>
</dbReference>
<dbReference type="EMBL" id="AY370282">
    <property type="protein sequence ID" value="AAR21769.1"/>
    <property type="molecule type" value="Genomic_DNA"/>
</dbReference>
<dbReference type="EMBL" id="AY370283">
    <property type="protein sequence ID" value="AAR21770.1"/>
    <property type="molecule type" value="Genomic_DNA"/>
</dbReference>
<dbReference type="EMBL" id="AY370284">
    <property type="protein sequence ID" value="AAR21771.1"/>
    <property type="molecule type" value="Genomic_DNA"/>
</dbReference>
<dbReference type="EMBL" id="AY370285">
    <property type="protein sequence ID" value="AAR21772.1"/>
    <property type="molecule type" value="Genomic_DNA"/>
</dbReference>
<dbReference type="EMBL" id="AY370286">
    <property type="protein sequence ID" value="AAR21773.1"/>
    <property type="molecule type" value="Genomic_DNA"/>
</dbReference>
<dbReference type="EMBL" id="AY370287">
    <property type="protein sequence ID" value="AAR21774.1"/>
    <property type="molecule type" value="Genomic_DNA"/>
</dbReference>
<dbReference type="EMBL" id="AY370288">
    <property type="protein sequence ID" value="AAR21775.1"/>
    <property type="molecule type" value="Genomic_DNA"/>
</dbReference>
<dbReference type="EMBL" id="AY370289">
    <property type="protein sequence ID" value="AAR21776.1"/>
    <property type="molecule type" value="Genomic_DNA"/>
</dbReference>
<dbReference type="EMBL" id="AY370290">
    <property type="protein sequence ID" value="AAR21777.1"/>
    <property type="molecule type" value="Genomic_DNA"/>
</dbReference>
<dbReference type="EMBL" id="AY370291">
    <property type="protein sequence ID" value="AAR21778.1"/>
    <property type="molecule type" value="Genomic_DNA"/>
</dbReference>
<dbReference type="EMBL" id="AY370292">
    <property type="protein sequence ID" value="AAR21779.1"/>
    <property type="molecule type" value="Genomic_DNA"/>
</dbReference>
<dbReference type="EMBL" id="AY370293">
    <property type="protein sequence ID" value="AAR21780.1"/>
    <property type="molecule type" value="Genomic_DNA"/>
</dbReference>
<dbReference type="EMBL" id="AY370294">
    <property type="protein sequence ID" value="AAR21781.1"/>
    <property type="molecule type" value="Genomic_DNA"/>
</dbReference>
<dbReference type="EMBL" id="AY370295">
    <property type="protein sequence ID" value="AAR21782.1"/>
    <property type="molecule type" value="Genomic_DNA"/>
</dbReference>
<dbReference type="EMBL" id="AY370296">
    <property type="protein sequence ID" value="AAR21783.1"/>
    <property type="molecule type" value="Genomic_DNA"/>
</dbReference>
<dbReference type="EMBL" id="AY370297">
    <property type="protein sequence ID" value="AAR21784.1"/>
    <property type="molecule type" value="Genomic_DNA"/>
</dbReference>
<dbReference type="EMBL" id="AY370298">
    <property type="protein sequence ID" value="AAR21785.1"/>
    <property type="molecule type" value="Genomic_DNA"/>
</dbReference>
<dbReference type="EMBL" id="AY370299">
    <property type="protein sequence ID" value="AAR21786.1"/>
    <property type="molecule type" value="Genomic_DNA"/>
</dbReference>
<dbReference type="EMBL" id="AY370300">
    <property type="protein sequence ID" value="AAR21787.1"/>
    <property type="molecule type" value="Genomic_DNA"/>
</dbReference>
<dbReference type="EMBL" id="AY370301">
    <property type="protein sequence ID" value="AAR21788.1"/>
    <property type="molecule type" value="Genomic_DNA"/>
</dbReference>
<dbReference type="EMBL" id="AY370302">
    <property type="protein sequence ID" value="AAR21789.1"/>
    <property type="molecule type" value="Genomic_DNA"/>
</dbReference>
<dbReference type="EMBL" id="AY370303">
    <property type="protein sequence ID" value="AAR21790.1"/>
    <property type="molecule type" value="Genomic_DNA"/>
</dbReference>
<dbReference type="EMBL" id="AY370304">
    <property type="protein sequence ID" value="AAR21791.1"/>
    <property type="molecule type" value="Genomic_DNA"/>
</dbReference>
<dbReference type="EMBL" id="AY370305">
    <property type="protein sequence ID" value="AAR21792.1"/>
    <property type="molecule type" value="Genomic_DNA"/>
</dbReference>
<dbReference type="EMBL" id="AY370306">
    <property type="protein sequence ID" value="AAR21793.1"/>
    <property type="molecule type" value="Genomic_DNA"/>
</dbReference>
<dbReference type="EMBL" id="AY370307">
    <property type="protein sequence ID" value="AAR21794.1"/>
    <property type="molecule type" value="Genomic_DNA"/>
</dbReference>
<dbReference type="EMBL" id="AY370308">
    <property type="protein sequence ID" value="AAR21795.1"/>
    <property type="molecule type" value="Genomic_DNA"/>
</dbReference>
<dbReference type="EMBL" id="AY370309">
    <property type="protein sequence ID" value="AAR21796.1"/>
    <property type="molecule type" value="Genomic_DNA"/>
</dbReference>
<dbReference type="EMBL" id="AY370310">
    <property type="protein sequence ID" value="AAR21797.1"/>
    <property type="molecule type" value="Genomic_DNA"/>
</dbReference>
<dbReference type="EMBL" id="AY370311">
    <property type="protein sequence ID" value="AAR21798.1"/>
    <property type="molecule type" value="Genomic_DNA"/>
</dbReference>
<dbReference type="EMBL" id="AY370312">
    <property type="protein sequence ID" value="AAR21799.1"/>
    <property type="molecule type" value="Genomic_DNA"/>
</dbReference>
<dbReference type="EMBL" id="AY370313">
    <property type="protein sequence ID" value="AAR21800.1"/>
    <property type="molecule type" value="Genomic_DNA"/>
</dbReference>
<dbReference type="EMBL" id="AY370314">
    <property type="protein sequence ID" value="AAR21801.1"/>
    <property type="molecule type" value="Genomic_DNA"/>
</dbReference>
<dbReference type="EMBL" id="AY370315">
    <property type="protein sequence ID" value="AAR21802.1"/>
    <property type="molecule type" value="Genomic_DNA"/>
</dbReference>
<dbReference type="EMBL" id="AY370316">
    <property type="protein sequence ID" value="AAR21803.1"/>
    <property type="molecule type" value="Genomic_DNA"/>
</dbReference>
<dbReference type="EMBL" id="AY370317">
    <property type="protein sequence ID" value="AAR21804.1"/>
    <property type="molecule type" value="Genomic_DNA"/>
</dbReference>
<dbReference type="EMBL" id="AY370318">
    <property type="protein sequence ID" value="AAR21805.1"/>
    <property type="molecule type" value="Genomic_DNA"/>
</dbReference>
<dbReference type="EMBL" id="AY370319">
    <property type="protein sequence ID" value="AAR21806.1"/>
    <property type="molecule type" value="Genomic_DNA"/>
</dbReference>
<dbReference type="EMBL" id="AY370320">
    <property type="protein sequence ID" value="AAR21807.1"/>
    <property type="molecule type" value="Genomic_DNA"/>
</dbReference>
<dbReference type="EMBL" id="AY370321">
    <property type="protein sequence ID" value="AAR21808.1"/>
    <property type="molecule type" value="Genomic_DNA"/>
</dbReference>
<dbReference type="EMBL" id="AY370322">
    <property type="protein sequence ID" value="AAR21809.1"/>
    <property type="molecule type" value="Genomic_DNA"/>
</dbReference>
<dbReference type="EMBL" id="AY370323">
    <property type="protein sequence ID" value="AAR21810.1"/>
    <property type="molecule type" value="Genomic_DNA"/>
</dbReference>
<dbReference type="EMBL" id="AY370324">
    <property type="protein sequence ID" value="AAR21811.1"/>
    <property type="molecule type" value="Genomic_DNA"/>
</dbReference>
<dbReference type="EMBL" id="AY370325">
    <property type="protein sequence ID" value="AAR21812.1"/>
    <property type="molecule type" value="Genomic_DNA"/>
</dbReference>
<dbReference type="EMBL" id="AY370326">
    <property type="protein sequence ID" value="AAR21813.1"/>
    <property type="molecule type" value="Genomic_DNA"/>
</dbReference>
<dbReference type="EMBL" id="AY370327">
    <property type="protein sequence ID" value="AAR21814.1"/>
    <property type="molecule type" value="Genomic_DNA"/>
</dbReference>
<dbReference type="EMBL" id="AY370328">
    <property type="protein sequence ID" value="AAR21815.1"/>
    <property type="molecule type" value="Genomic_DNA"/>
</dbReference>
<dbReference type="EMBL" id="AY370329">
    <property type="protein sequence ID" value="AAR21816.1"/>
    <property type="molecule type" value="Genomic_DNA"/>
</dbReference>
<dbReference type="EMBL" id="AY370330">
    <property type="protein sequence ID" value="AAR21817.1"/>
    <property type="molecule type" value="Genomic_DNA"/>
</dbReference>
<dbReference type="EMBL" id="AY370331">
    <property type="protein sequence ID" value="AAR21818.1"/>
    <property type="molecule type" value="Genomic_DNA"/>
</dbReference>
<dbReference type="EMBL" id="AY370332">
    <property type="protein sequence ID" value="AAR21819.1"/>
    <property type="molecule type" value="Genomic_DNA"/>
</dbReference>
<dbReference type="EMBL" id="AY370333">
    <property type="protein sequence ID" value="AAR21820.1"/>
    <property type="molecule type" value="Genomic_DNA"/>
</dbReference>
<dbReference type="EMBL" id="AY370334">
    <property type="protein sequence ID" value="AAR21821.1"/>
    <property type="molecule type" value="Genomic_DNA"/>
</dbReference>
<dbReference type="EMBL" id="AY370335">
    <property type="protein sequence ID" value="AAR21822.1"/>
    <property type="molecule type" value="Genomic_DNA"/>
</dbReference>
<dbReference type="EMBL" id="AY370336">
    <property type="protein sequence ID" value="AAR21823.1"/>
    <property type="molecule type" value="Genomic_DNA"/>
</dbReference>
<dbReference type="EMBL" id="AY370337">
    <property type="protein sequence ID" value="AAR21824.1"/>
    <property type="molecule type" value="Genomic_DNA"/>
</dbReference>
<dbReference type="EMBL" id="AY370338">
    <property type="protein sequence ID" value="AAR21825.1"/>
    <property type="molecule type" value="Genomic_DNA"/>
</dbReference>
<dbReference type="EMBL" id="AY370339">
    <property type="protein sequence ID" value="AAR21826.1"/>
    <property type="molecule type" value="Genomic_DNA"/>
</dbReference>
<dbReference type="EMBL" id="AY370340">
    <property type="protein sequence ID" value="AAR21827.1"/>
    <property type="molecule type" value="Genomic_DNA"/>
</dbReference>
<dbReference type="EMBL" id="AY370341">
    <property type="protein sequence ID" value="AAR21828.1"/>
    <property type="molecule type" value="Genomic_DNA"/>
</dbReference>
<dbReference type="EMBL" id="AY370342">
    <property type="protein sequence ID" value="AAR21829.1"/>
    <property type="molecule type" value="Genomic_DNA"/>
</dbReference>
<dbReference type="EMBL" id="AY370343">
    <property type="protein sequence ID" value="AAR21830.1"/>
    <property type="molecule type" value="Genomic_DNA"/>
</dbReference>
<dbReference type="EMBL" id="AY370344">
    <property type="protein sequence ID" value="AAR21831.1"/>
    <property type="molecule type" value="Genomic_DNA"/>
</dbReference>
<dbReference type="EMBL" id="AY370345">
    <property type="protein sequence ID" value="AAR21832.1"/>
    <property type="molecule type" value="Genomic_DNA"/>
</dbReference>
<dbReference type="EMBL" id="AY370346">
    <property type="protein sequence ID" value="AAR21833.1"/>
    <property type="molecule type" value="Genomic_DNA"/>
</dbReference>
<dbReference type="EMBL" id="AY370347">
    <property type="protein sequence ID" value="AAR21834.1"/>
    <property type="molecule type" value="Genomic_DNA"/>
</dbReference>
<dbReference type="EMBL" id="AY370348">
    <property type="protein sequence ID" value="AAR21835.1"/>
    <property type="molecule type" value="Genomic_DNA"/>
</dbReference>
<dbReference type="EMBL" id="AY370349">
    <property type="protein sequence ID" value="AAR21836.1"/>
    <property type="molecule type" value="Genomic_DNA"/>
</dbReference>
<dbReference type="EMBL" id="AY370350">
    <property type="protein sequence ID" value="AAR21837.1"/>
    <property type="molecule type" value="Genomic_DNA"/>
</dbReference>
<dbReference type="EMBL" id="AY518670">
    <property type="protein sequence ID" value="AAR91395.1"/>
    <property type="molecule type" value="Genomic_DNA"/>
</dbReference>
<dbReference type="EMBL" id="AY518671">
    <property type="protein sequence ID" value="AAR91403.1"/>
    <property type="molecule type" value="Genomic_DNA"/>
</dbReference>
<dbReference type="EMBL" id="AY518672">
    <property type="protein sequence ID" value="AAR91416.1"/>
    <property type="molecule type" value="Genomic_DNA"/>
</dbReference>
<dbReference type="EMBL" id="AY518673">
    <property type="protein sequence ID" value="AAR91429.1"/>
    <property type="molecule type" value="Genomic_DNA"/>
</dbReference>
<dbReference type="EMBL" id="AY518674">
    <property type="protein sequence ID" value="AAR91442.1"/>
    <property type="molecule type" value="Genomic_DNA"/>
</dbReference>
<dbReference type="EMBL" id="GQ222022">
    <property type="protein sequence ID" value="ACT09365.1"/>
    <property type="molecule type" value="Genomic_DNA"/>
</dbReference>
<dbReference type="EMBL" id="AF200833">
    <property type="protein sequence ID" value="AAF77297.1"/>
    <property type="molecule type" value="Genomic_DNA"/>
</dbReference>
<dbReference type="EMBL" id="AF200834">
    <property type="protein sequence ID" value="AAF77311.1"/>
    <property type="molecule type" value="Genomic_DNA"/>
</dbReference>
<dbReference type="EMBL" id="AF200835">
    <property type="protein sequence ID" value="AAF77318.1"/>
    <property type="molecule type" value="Genomic_DNA"/>
</dbReference>
<dbReference type="EMBL" id="AF200836">
    <property type="protein sequence ID" value="AAF77331.1"/>
    <property type="molecule type" value="Genomic_DNA"/>
</dbReference>
<dbReference type="EMBL" id="AF200837">
    <property type="protein sequence ID" value="AAF77344.1"/>
    <property type="molecule type" value="Genomic_DNA"/>
</dbReference>
<dbReference type="EMBL" id="AF200838">
    <property type="protein sequence ID" value="AAF77357.1"/>
    <property type="molecule type" value="Genomic_DNA"/>
</dbReference>
<dbReference type="EMBL" id="AF200839">
    <property type="protein sequence ID" value="AAF77371.1"/>
    <property type="molecule type" value="Genomic_DNA"/>
</dbReference>
<dbReference type="EMBL" id="AF200840">
    <property type="protein sequence ID" value="AAF77383.1"/>
    <property type="molecule type" value="Genomic_DNA"/>
</dbReference>
<dbReference type="EMBL" id="AF200841">
    <property type="protein sequence ID" value="AAF77396.1"/>
    <property type="molecule type" value="Genomic_DNA"/>
</dbReference>
<dbReference type="EMBL" id="AF200842">
    <property type="protein sequence ID" value="AAF77414.1"/>
    <property type="molecule type" value="Genomic_DNA"/>
</dbReference>
<dbReference type="EMBL" id="AF200843">
    <property type="protein sequence ID" value="AAF77422.1"/>
    <property type="molecule type" value="Genomic_DNA"/>
</dbReference>
<dbReference type="EMBL" id="AF200844">
    <property type="protein sequence ID" value="AAF77435.1"/>
    <property type="molecule type" value="Genomic_DNA"/>
</dbReference>
<dbReference type="EMBL" id="AF200845">
    <property type="protein sequence ID" value="AAF77448.1"/>
    <property type="molecule type" value="Genomic_DNA"/>
</dbReference>
<dbReference type="EMBL" id="AF200846">
    <property type="protein sequence ID" value="AAF77461.1"/>
    <property type="molecule type" value="Genomic_DNA"/>
</dbReference>
<dbReference type="EMBL" id="AF200847">
    <property type="protein sequence ID" value="AAF77474.1"/>
    <property type="molecule type" value="Genomic_DNA"/>
</dbReference>
<dbReference type="EMBL" id="AF200848">
    <property type="protein sequence ID" value="AAF77487.1"/>
    <property type="molecule type" value="Genomic_DNA"/>
</dbReference>
<dbReference type="EMBL" id="AF200849">
    <property type="protein sequence ID" value="AAF77501.1"/>
    <property type="molecule type" value="Genomic_DNA"/>
</dbReference>
<dbReference type="EMBL" id="AF200850">
    <property type="protein sequence ID" value="AAF77513.1"/>
    <property type="molecule type" value="Genomic_DNA"/>
</dbReference>
<dbReference type="EMBL" id="AF200851">
    <property type="protein sequence ID" value="AAF77527.1"/>
    <property type="molecule type" value="Genomic_DNA"/>
</dbReference>
<dbReference type="EMBL" id="AF200852">
    <property type="protein sequence ID" value="AAF77539.1"/>
    <property type="molecule type" value="Genomic_DNA"/>
</dbReference>
<dbReference type="EMBL" id="AF200853">
    <property type="protein sequence ID" value="AAF77552.1"/>
    <property type="molecule type" value="Genomic_DNA"/>
</dbReference>
<dbReference type="EMBL" id="AF200854">
    <property type="protein sequence ID" value="AAF77565.1"/>
    <property type="molecule type" value="Genomic_DNA"/>
</dbReference>
<dbReference type="SMR" id="P50253"/>
<dbReference type="STRING" id="7240.P50253"/>
<dbReference type="KEGG" id="dsi:COX2"/>
<dbReference type="CTD" id="4513"/>
<dbReference type="Proteomes" id="UP000000304">
    <property type="component" value="Mitochondrion"/>
</dbReference>
<dbReference type="GO" id="GO:0005743">
    <property type="term" value="C:mitochondrial inner membrane"/>
    <property type="evidence" value="ECO:0007669"/>
    <property type="project" value="UniProtKB-SubCell"/>
</dbReference>
<dbReference type="GO" id="GO:0005507">
    <property type="term" value="F:copper ion binding"/>
    <property type="evidence" value="ECO:0007669"/>
    <property type="project" value="InterPro"/>
</dbReference>
<dbReference type="GO" id="GO:0004129">
    <property type="term" value="F:cytochrome-c oxidase activity"/>
    <property type="evidence" value="ECO:0007669"/>
    <property type="project" value="UniProtKB-EC"/>
</dbReference>
<dbReference type="GO" id="GO:0042773">
    <property type="term" value="P:ATP synthesis coupled electron transport"/>
    <property type="evidence" value="ECO:0007669"/>
    <property type="project" value="TreeGrafter"/>
</dbReference>
<dbReference type="CDD" id="cd13912">
    <property type="entry name" value="CcO_II_C"/>
    <property type="match status" value="1"/>
</dbReference>
<dbReference type="FunFam" id="1.10.287.90:FF:000006">
    <property type="entry name" value="Cytochrome c oxidase subunit 2"/>
    <property type="match status" value="1"/>
</dbReference>
<dbReference type="FunFam" id="2.60.40.420:FF:000001">
    <property type="entry name" value="Cytochrome c oxidase subunit 2"/>
    <property type="match status" value="1"/>
</dbReference>
<dbReference type="Gene3D" id="1.10.287.90">
    <property type="match status" value="1"/>
</dbReference>
<dbReference type="Gene3D" id="2.60.40.420">
    <property type="entry name" value="Cupredoxins - blue copper proteins"/>
    <property type="match status" value="1"/>
</dbReference>
<dbReference type="InterPro" id="IPR045187">
    <property type="entry name" value="CcO_II"/>
</dbReference>
<dbReference type="InterPro" id="IPR002429">
    <property type="entry name" value="CcO_II-like_C"/>
</dbReference>
<dbReference type="InterPro" id="IPR034210">
    <property type="entry name" value="CcO_II_C"/>
</dbReference>
<dbReference type="InterPro" id="IPR001505">
    <property type="entry name" value="Copper_CuA"/>
</dbReference>
<dbReference type="InterPro" id="IPR008972">
    <property type="entry name" value="Cupredoxin"/>
</dbReference>
<dbReference type="InterPro" id="IPR014222">
    <property type="entry name" value="Cyt_c_oxidase_su2"/>
</dbReference>
<dbReference type="InterPro" id="IPR011759">
    <property type="entry name" value="Cyt_c_oxidase_su2_TM_dom"/>
</dbReference>
<dbReference type="InterPro" id="IPR036257">
    <property type="entry name" value="Cyt_c_oxidase_su2_TM_sf"/>
</dbReference>
<dbReference type="NCBIfam" id="TIGR02866">
    <property type="entry name" value="CoxB"/>
    <property type="match status" value="1"/>
</dbReference>
<dbReference type="PANTHER" id="PTHR22888:SF9">
    <property type="entry name" value="CYTOCHROME C OXIDASE SUBUNIT 2"/>
    <property type="match status" value="1"/>
</dbReference>
<dbReference type="PANTHER" id="PTHR22888">
    <property type="entry name" value="CYTOCHROME C OXIDASE, SUBUNIT II"/>
    <property type="match status" value="1"/>
</dbReference>
<dbReference type="Pfam" id="PF00116">
    <property type="entry name" value="COX2"/>
    <property type="match status" value="1"/>
</dbReference>
<dbReference type="Pfam" id="PF02790">
    <property type="entry name" value="COX2_TM"/>
    <property type="match status" value="1"/>
</dbReference>
<dbReference type="PRINTS" id="PR01166">
    <property type="entry name" value="CYCOXIDASEII"/>
</dbReference>
<dbReference type="SUPFAM" id="SSF49503">
    <property type="entry name" value="Cupredoxins"/>
    <property type="match status" value="1"/>
</dbReference>
<dbReference type="SUPFAM" id="SSF81464">
    <property type="entry name" value="Cytochrome c oxidase subunit II-like, transmembrane region"/>
    <property type="match status" value="1"/>
</dbReference>
<dbReference type="PROSITE" id="PS00078">
    <property type="entry name" value="COX2"/>
    <property type="match status" value="1"/>
</dbReference>
<dbReference type="PROSITE" id="PS50857">
    <property type="entry name" value="COX2_CUA"/>
    <property type="match status" value="1"/>
</dbReference>
<dbReference type="PROSITE" id="PS50999">
    <property type="entry name" value="COX2_TM"/>
    <property type="match status" value="1"/>
</dbReference>
<gene>
    <name type="primary">mt:CoII</name>
    <name type="synonym">CoII</name>
</gene>
<keyword id="KW-0186">Copper</keyword>
<keyword id="KW-0249">Electron transport</keyword>
<keyword id="KW-0460">Magnesium</keyword>
<keyword id="KW-0472">Membrane</keyword>
<keyword id="KW-0479">Metal-binding</keyword>
<keyword id="KW-0496">Mitochondrion</keyword>
<keyword id="KW-0999">Mitochondrion inner membrane</keyword>
<keyword id="KW-1185">Reference proteome</keyword>
<keyword id="KW-0679">Respiratory chain</keyword>
<keyword id="KW-1278">Translocase</keyword>
<keyword id="KW-0812">Transmembrane</keyword>
<keyword id="KW-1133">Transmembrane helix</keyword>
<keyword id="KW-0813">Transport</keyword>
<evidence type="ECO:0000250" key="1">
    <source>
        <dbReference type="UniProtKB" id="P00410"/>
    </source>
</evidence>
<evidence type="ECO:0000255" key="2"/>
<evidence type="ECO:0000269" key="3">
    <source>
    </source>
</evidence>
<evidence type="ECO:0000269" key="4">
    <source>
    </source>
</evidence>
<evidence type="ECO:0000269" key="5">
    <source>
    </source>
</evidence>
<evidence type="ECO:0000269" key="6">
    <source ref="4"/>
</evidence>
<evidence type="ECO:0000305" key="7"/>
<geneLocation type="mitochondrion"/>
<comment type="function">
    <text evidence="1">Component of the cytochrome c oxidase, the last enzyme in the mitochondrial electron transport chain which drives oxidative phosphorylation. The respiratory chain contains 3 multisubunit complexes succinate dehydrogenase (complex II, CII), ubiquinol-cytochrome c oxidoreductase (cytochrome b-c1 complex, complex III, CIII) and cytochrome c oxidase (complex IV, CIV), that cooperate to transfer electrons derived from NADH and succinate to molecular oxygen, creating an electrochemical gradient over the inner membrane that drives transmembrane transport and the ATP synthase. Cytochrome c oxidase is the component of the respiratory chain that catalyzes the reduction of oxygen to water. Electrons originating from reduced cytochrome c in the intermembrane space (IMS) are transferred via the dinuclear copper A center (CU(A)) of subunit 2 and heme A of subunit 1 to the active site in subunit 1, a binuclear center (BNC) formed by heme A3 and copper B (CU(B)). The BNC reduces molecular oxygen to 2 water molecules using 4 electrons from cytochrome c in the IMS and 4 protons from the mitochondrial matrix.</text>
</comment>
<comment type="catalytic activity">
    <reaction evidence="1">
        <text>4 Fe(II)-[cytochrome c] + O2 + 8 H(+)(in) = 4 Fe(III)-[cytochrome c] + 2 H2O + 4 H(+)(out)</text>
        <dbReference type="Rhea" id="RHEA:11436"/>
        <dbReference type="Rhea" id="RHEA-COMP:10350"/>
        <dbReference type="Rhea" id="RHEA-COMP:14399"/>
        <dbReference type="ChEBI" id="CHEBI:15377"/>
        <dbReference type="ChEBI" id="CHEBI:15378"/>
        <dbReference type="ChEBI" id="CHEBI:15379"/>
        <dbReference type="ChEBI" id="CHEBI:29033"/>
        <dbReference type="ChEBI" id="CHEBI:29034"/>
        <dbReference type="EC" id="7.1.1.9"/>
    </reaction>
    <physiologicalReaction direction="left-to-right" evidence="1">
        <dbReference type="Rhea" id="RHEA:11437"/>
    </physiologicalReaction>
</comment>
<comment type="cofactor">
    <cofactor evidence="1">
        <name>Cu cation</name>
        <dbReference type="ChEBI" id="CHEBI:23378"/>
    </cofactor>
    <text evidence="1">Binds a dinuclear copper A center per subunit.</text>
</comment>
<comment type="subunit">
    <text evidence="1">Component of the cytochrome c oxidase (complex IV, CIV), a multisubunit enzyme composed of a catalytic core of 3 subunits and several supernumerary subunits. The complex exists as a monomer or a dimer and forms supercomplexes (SCs) in the inner mitochondrial membrane with ubiquinol-cytochrome c oxidoreductase (cytochrome b-c1 complex, complex III, CIII).</text>
</comment>
<comment type="subcellular location">
    <subcellularLocation>
        <location evidence="1">Mitochondrion inner membrane</location>
        <topology evidence="1">Multi-pass membrane protein</topology>
    </subcellularLocation>
</comment>
<comment type="similarity">
    <text evidence="7">Belongs to the cytochrome c oxidase subunit 2 family.</text>
</comment>
<comment type="sequence caution" evidence="7">
    <conflict type="erroneous initiation">
        <sequence resource="EMBL-CDS" id="AAD13956"/>
    </conflict>
</comment>
<name>COX2_DROSI</name>
<sequence length="228" mass="26148">MSTWANLGLQDSASPLMEQLIFFHDHALLILVMITVLVGYLMFMLFFNNYVNRFLLHGQLIEMIWTILPAIILLFIALPSLRLLYLLDEINEPSVTLKSIGHQWYWSYEYSDFNNIEFDSYMIPTNELTTDGFRLLDVDNRVILPMNSQIRILVTAADVIHSWTVPALGVKVDGTPGRLNQTNFFINRPGLFYGQCSEICGANHSFMPIVIESVPVNHFIKWISSNNS</sequence>
<reference key="1">
    <citation type="journal article" date="1993" name="Genet. Res.">
        <title>Evolution of the mitochondrial ATPase 6 gene in Drosophila: unusually high level of polymorphism in D. melanogaster.</title>
        <authorList>
            <person name="Kaneko M."/>
            <person name="Satta Y."/>
            <person name="Matsuura E.T."/>
            <person name="Chigusa S.I."/>
        </authorList>
    </citation>
    <scope>NUCLEOTIDE SEQUENCE [GENOMIC DNA]</scope>
</reference>
<reference key="2">
    <citation type="journal article" date="2002" name="Mol. Phylogenet. Evol.">
        <title>Phylogeny of the subgenus sophophora (Diptera: drosophilidae) based on combined analysis of nuclear and mitochondrial sequences.</title>
        <authorList>
            <person name="O'Grady P.M."/>
            <person name="Kidwell M.G."/>
        </authorList>
    </citation>
    <scope>NUCLEOTIDE SEQUENCE [GENOMIC DNA]</scope>
    <scope>VARIANTS ALA-25; SER-129 AND ILE-130</scope>
    <source>
        <strain>14021-0251.0</strain>
    </source>
</reference>
<reference key="3">
    <citation type="journal article" date="2004" name="Mol. Biol. Evol.">
        <title>Sequential evolution of a symbiont inferred from the host: Wolbachia and Drosophila simulans.</title>
        <authorList>
            <person name="Ballard J.W.O."/>
        </authorList>
    </citation>
    <scope>NUCLEOTIDE SEQUENCE [GENOMIC DNA]</scope>
    <scope>VARIANTS SER-129; ILE-130 AND ILE-165</scope>
    <source>
        <strain>AU023</strain>
        <strain>KY003</strain>
        <strain>KY004</strain>
        <strain>KY005</strain>
        <strain>KY006</strain>
        <strain>KY007</strain>
        <strain>KY009</strain>
        <strain>KY011</strain>
        <strain>KY017</strain>
        <strain>KY019</strain>
        <strain>KY021</strain>
        <strain>KY022</strain>
        <strain>KY025</strain>
        <strain>KY027</strain>
        <strain>KY028</strain>
        <strain>KY032</strain>
        <strain>KY045</strain>
        <strain>KY048</strain>
        <strain>KY052</strain>
        <strain>KY053</strain>
        <strain>KY071</strain>
        <strain>KY201</strain>
        <strain>KY202</strain>
        <strain>KY203</strain>
        <strain>KY204</strain>
        <strain>KY207</strain>
        <strain>KY213</strain>
        <strain>KY214</strain>
        <strain>KY215</strain>
        <strain>KY216</strain>
        <strain>KY217</strain>
        <strain>KY218</strain>
        <strain>KY220</strain>
        <strain>KY224</strain>
        <strain>KY227</strain>
        <strain>KY232</strain>
        <strain>KY234</strain>
        <strain>KY235</strain>
        <strain>KY240</strain>
        <strain>KY242</strain>
        <strain>KY244</strain>
        <strain>KY245</strain>
        <strain>KY249</strain>
        <strain>KY251</strain>
        <strain>KY252</strain>
        <strain>KY257</strain>
        <strain>KY259</strain>
        <strain>KY260</strain>
        <strain>MW13</strain>
        <strain>MW16</strain>
        <strain>MW26</strain>
        <strain>MW34</strain>
        <strain>MW39</strain>
        <strain>MW41</strain>
        <strain>MW42</strain>
        <strain>MW51</strain>
        <strain>MW52</strain>
        <strain>MW61</strain>
        <strain>TZ03a</strain>
        <strain>TZ05a</strain>
        <strain>TZ06a</strain>
        <strain>TZ07a</strain>
        <strain>TZ08a</strain>
        <strain>TZ09a</strain>
        <strain>TZ13a</strain>
        <strain>TZ15a</strain>
        <strain>TZ17a</strain>
        <strain>TZ23</strain>
        <strain>TZ33</strain>
        <strain>TZ35</strain>
        <strain>TZ37</strain>
        <strain>TZ38</strain>
        <strain>TZ39</strain>
        <strain>TZ40</strain>
        <strain>TZ41</strain>
        <strain>TZ42</strain>
        <strain>TZ46</strain>
        <strain>TZ49</strain>
    </source>
</reference>
<reference key="4">
    <citation type="submission" date="2009-05" db="EMBL/GenBank/DDBJ databases">
        <title>Distinguishing Drosophila melanogaster from Drosophila simulans using restriction digest of mitochondrial COII.</title>
        <authorList>
            <person name="Tarnowski H.E."/>
            <person name="Marshall K."/>
            <person name="Sinclair B.J."/>
        </authorList>
    </citation>
    <scope>NUCLEOTIDE SEQUENCE [GENOMIC DNA]</scope>
    <scope>VARIANTS TYR-118; SER-129; ILE-130 AND ILE-165</scope>
</reference>
<reference key="5">
    <citation type="journal article" date="2000" name="J. Mol. Evol.">
        <title>Comparative genomics of mitochondrial DNA in Drosophila simulans.</title>
        <authorList>
            <person name="Ballard J.W."/>
        </authorList>
    </citation>
    <scope>NUCLEOTIDE SEQUENCE [LARGE SCALE GENOMIC DNA]</scope>
    <scope>VARIANTS SER-115; TYR-118; SER-129; ILE-130 AND ILE-165</scope>
    <source>
        <strain>C167</strain>
        <strain>DSR</strain>
        <strain>DSW</strain>
        <strain>HW00</strain>
        <strain>HW09</strain>
        <strain>MD106</strain>
        <strain>MD111</strain>
        <strain>MD112</strain>
        <strain>MD199</strain>
        <strain>MD221</strain>
        <strain>MD225</strain>
        <strain>MDW86</strain>
        <strain>NC37</strain>
        <strain>NC48</strain>
        <strain>RU00</strain>
        <strain>RU01</strain>
        <strain>RU07</strain>
        <strain>RU259</strain>
        <strain>RU35</strain>
        <strain>Sc00</strain>
        <strain>TT00</strain>
        <strain>TT01</strain>
    </source>
</reference>